<organism>
    <name type="scientific">Rattus norvegicus</name>
    <name type="common">Rat</name>
    <dbReference type="NCBI Taxonomy" id="10116"/>
    <lineage>
        <taxon>Eukaryota</taxon>
        <taxon>Metazoa</taxon>
        <taxon>Chordata</taxon>
        <taxon>Craniata</taxon>
        <taxon>Vertebrata</taxon>
        <taxon>Euteleostomi</taxon>
        <taxon>Mammalia</taxon>
        <taxon>Eutheria</taxon>
        <taxon>Euarchontoglires</taxon>
        <taxon>Glires</taxon>
        <taxon>Rodentia</taxon>
        <taxon>Myomorpha</taxon>
        <taxon>Muroidea</taxon>
        <taxon>Muridae</taxon>
        <taxon>Murinae</taxon>
        <taxon>Rattus</taxon>
    </lineage>
</organism>
<protein>
    <recommendedName>
        <fullName>Granzyme-like protein 1</fullName>
        <ecNumber>3.4.21.-</ecNumber>
    </recommendedName>
    <alternativeName>
        <fullName>GLP I</fullName>
    </alternativeName>
    <alternativeName>
        <fullName>Granzyme-like protein I</fullName>
        <shortName>GLP-1</shortName>
    </alternativeName>
</protein>
<keyword id="KW-1015">Disulfide bond</keyword>
<keyword id="KW-0325">Glycoprotein</keyword>
<keyword id="KW-0378">Hydrolase</keyword>
<keyword id="KW-0645">Protease</keyword>
<keyword id="KW-1185">Reference proteome</keyword>
<keyword id="KW-0720">Serine protease</keyword>
<keyword id="KW-0732">Signal</keyword>
<keyword id="KW-0865">Zymogen</keyword>
<proteinExistence type="evidence at transcript level"/>
<comment type="function">
    <text>This enzyme is necessary for target cell lysis in cell-mediated immune responses.</text>
</comment>
<comment type="tissue specificity">
    <text>Duodenum.</text>
</comment>
<comment type="similarity">
    <text evidence="3">Belongs to the peptidase S1 family. Granzyme subfamily.</text>
</comment>
<feature type="signal peptide" evidence="1">
    <location>
        <begin position="1"/>
        <end position="18"/>
    </location>
</feature>
<feature type="propeptide" id="PRO_0000027427" description="Activation peptide">
    <location>
        <begin position="19"/>
        <end position="20"/>
    </location>
</feature>
<feature type="chain" id="PRO_0000027428" description="Granzyme-like protein 1">
    <location>
        <begin position="21"/>
        <end position="248"/>
    </location>
</feature>
<feature type="domain" description="Peptidase S1" evidence="3">
    <location>
        <begin position="21"/>
        <end position="246"/>
    </location>
</feature>
<feature type="active site" description="Charge relay system" evidence="1">
    <location>
        <position position="65"/>
    </location>
</feature>
<feature type="active site" description="Charge relay system" evidence="1">
    <location>
        <position position="109"/>
    </location>
</feature>
<feature type="active site" description="Charge relay system" evidence="1">
    <location>
        <position position="204"/>
    </location>
</feature>
<feature type="glycosylation site" description="N-linked (GlcNAc...) asparagine" evidence="2">
    <location>
        <position position="72"/>
    </location>
</feature>
<feature type="disulfide bond" evidence="3">
    <location>
        <begin position="50"/>
        <end position="66"/>
    </location>
</feature>
<feature type="disulfide bond" evidence="3">
    <location>
        <begin position="143"/>
        <end position="210"/>
    </location>
</feature>
<feature type="disulfide bond" evidence="3">
    <location>
        <begin position="174"/>
        <end position="189"/>
    </location>
</feature>
<reference key="1">
    <citation type="journal article" date="1993" name="FEBS Lett.">
        <title>Identification, sequence analysis, and characterization of cDNA clones encoding two granzyme-like serine proteinases from rat duodenum.</title>
        <authorList>
            <person name="Amerik A.Y."/>
            <person name="Yarovoi S.V."/>
            <person name="Grigorenko V.G."/>
            <person name="Antonov V.K."/>
        </authorList>
    </citation>
    <scope>NUCLEOTIDE SEQUENCE [MRNA]</scope>
    <source>
        <tissue>Duodenum</tissue>
    </source>
</reference>
<evidence type="ECO:0000250" key="1"/>
<evidence type="ECO:0000255" key="2"/>
<evidence type="ECO:0000255" key="3">
    <source>
        <dbReference type="PROSITE-ProRule" id="PRU00274"/>
    </source>
</evidence>
<accession>Q06605</accession>
<name>GRZ1_RAT</name>
<dbReference type="EC" id="3.4.21.-"/>
<dbReference type="EMBL" id="X66693">
    <property type="protein sequence ID" value="CAA47235.1"/>
    <property type="molecule type" value="mRNA"/>
</dbReference>
<dbReference type="PIR" id="S33755">
    <property type="entry name" value="S33755"/>
</dbReference>
<dbReference type="RefSeq" id="NP_001316820.1">
    <property type="nucleotide sequence ID" value="NM_001329891.1"/>
</dbReference>
<dbReference type="SMR" id="Q06605"/>
<dbReference type="FunCoup" id="Q06605">
    <property type="interactions" value="44"/>
</dbReference>
<dbReference type="STRING" id="10116.ENSRNOP00000043259"/>
<dbReference type="MEROPS" id="S01.097"/>
<dbReference type="GlyGen" id="Q06605">
    <property type="glycosylation" value="1 site"/>
</dbReference>
<dbReference type="PaxDb" id="10116-ENSRNOP00000029828"/>
<dbReference type="GeneID" id="102553861"/>
<dbReference type="UCSC" id="RGD:2320097">
    <property type="organism name" value="rat"/>
</dbReference>
<dbReference type="AGR" id="RGD:7500593"/>
<dbReference type="eggNOG" id="KOG3627">
    <property type="taxonomic scope" value="Eukaryota"/>
</dbReference>
<dbReference type="InParanoid" id="Q06605"/>
<dbReference type="PhylomeDB" id="Q06605"/>
<dbReference type="BRENDA" id="3.4.21.B3">
    <property type="organism ID" value="5301"/>
</dbReference>
<dbReference type="PRO" id="PR:Q06605"/>
<dbReference type="Proteomes" id="UP000002494">
    <property type="component" value="Unplaced"/>
</dbReference>
<dbReference type="GO" id="GO:0005615">
    <property type="term" value="C:extracellular space"/>
    <property type="evidence" value="ECO:0000318"/>
    <property type="project" value="GO_Central"/>
</dbReference>
<dbReference type="GO" id="GO:0004252">
    <property type="term" value="F:serine-type endopeptidase activity"/>
    <property type="evidence" value="ECO:0000318"/>
    <property type="project" value="GO_Central"/>
</dbReference>
<dbReference type="GO" id="GO:0140507">
    <property type="term" value="P:granzyme-mediated programmed cell death signaling pathway"/>
    <property type="evidence" value="ECO:0000318"/>
    <property type="project" value="GO_Central"/>
</dbReference>
<dbReference type="GO" id="GO:0051604">
    <property type="term" value="P:protein maturation"/>
    <property type="evidence" value="ECO:0000318"/>
    <property type="project" value="GO_Central"/>
</dbReference>
<dbReference type="GO" id="GO:0006508">
    <property type="term" value="P:proteolysis"/>
    <property type="evidence" value="ECO:0007669"/>
    <property type="project" value="UniProtKB-KW"/>
</dbReference>
<dbReference type="CDD" id="cd00190">
    <property type="entry name" value="Tryp_SPc"/>
    <property type="match status" value="1"/>
</dbReference>
<dbReference type="FunFam" id="2.40.10.10:FF:000120">
    <property type="entry name" value="Putative serine protease"/>
    <property type="match status" value="1"/>
</dbReference>
<dbReference type="Gene3D" id="2.40.10.10">
    <property type="entry name" value="Trypsin-like serine proteases"/>
    <property type="match status" value="2"/>
</dbReference>
<dbReference type="InterPro" id="IPR009003">
    <property type="entry name" value="Peptidase_S1_PA"/>
</dbReference>
<dbReference type="InterPro" id="IPR043504">
    <property type="entry name" value="Peptidase_S1_PA_chymotrypsin"/>
</dbReference>
<dbReference type="InterPro" id="IPR001314">
    <property type="entry name" value="Peptidase_S1A"/>
</dbReference>
<dbReference type="InterPro" id="IPR001254">
    <property type="entry name" value="Trypsin_dom"/>
</dbReference>
<dbReference type="InterPro" id="IPR018114">
    <property type="entry name" value="TRYPSIN_HIS"/>
</dbReference>
<dbReference type="InterPro" id="IPR033116">
    <property type="entry name" value="TRYPSIN_SER"/>
</dbReference>
<dbReference type="PANTHER" id="PTHR24271:SF81">
    <property type="entry name" value="GRANZYME B"/>
    <property type="match status" value="1"/>
</dbReference>
<dbReference type="PANTHER" id="PTHR24271">
    <property type="entry name" value="KALLIKREIN-RELATED"/>
    <property type="match status" value="1"/>
</dbReference>
<dbReference type="Pfam" id="PF00089">
    <property type="entry name" value="Trypsin"/>
    <property type="match status" value="1"/>
</dbReference>
<dbReference type="PRINTS" id="PR00722">
    <property type="entry name" value="CHYMOTRYPSIN"/>
</dbReference>
<dbReference type="SMART" id="SM00020">
    <property type="entry name" value="Tryp_SPc"/>
    <property type="match status" value="1"/>
</dbReference>
<dbReference type="SUPFAM" id="SSF50494">
    <property type="entry name" value="Trypsin-like serine proteases"/>
    <property type="match status" value="1"/>
</dbReference>
<dbReference type="PROSITE" id="PS50240">
    <property type="entry name" value="TRYPSIN_DOM"/>
    <property type="match status" value="1"/>
</dbReference>
<dbReference type="PROSITE" id="PS00134">
    <property type="entry name" value="TRYPSIN_HIS"/>
    <property type="match status" value="1"/>
</dbReference>
<dbReference type="PROSITE" id="PS00135">
    <property type="entry name" value="TRYPSIN_SER"/>
    <property type="match status" value="1"/>
</dbReference>
<sequence length="248" mass="27236">MNLLLLLLTVSLAPTTEAAEIIGGHEADPHSRPYMAYLQYKNEDSRDTICGGFLIREDFVLTAAHCSGSKINVTLGAHNIKEQEKTQQVIPVVKIIPHPAYNAKTISNDIMLLKLKSKAKRTRAVKTLSLPRSNFKVKPGDVCYVAGWGKLGPMGKFPDKLQEVELTVQEDQECETYLKNAYDKANQICAGDPKIKCASFQGDSGGPLVCKKVAAGIVSYGRKDGSTPRAFTKVSTFLSWIEETMKKS</sequence>